<comment type="function">
    <text evidence="2">GTP hydrolase that promotes the GTP-dependent binding of aminoacyl-tRNA to the A-site of ribosomes during protein biosynthesis.</text>
</comment>
<comment type="catalytic activity">
    <reaction evidence="2">
        <text>GTP + H2O = GDP + phosphate + H(+)</text>
        <dbReference type="Rhea" id="RHEA:19669"/>
        <dbReference type="ChEBI" id="CHEBI:15377"/>
        <dbReference type="ChEBI" id="CHEBI:15378"/>
        <dbReference type="ChEBI" id="CHEBI:37565"/>
        <dbReference type="ChEBI" id="CHEBI:43474"/>
        <dbReference type="ChEBI" id="CHEBI:58189"/>
        <dbReference type="EC" id="3.6.5.3"/>
    </reaction>
    <physiologicalReaction direction="left-to-right" evidence="2">
        <dbReference type="Rhea" id="RHEA:19670"/>
    </physiologicalReaction>
</comment>
<comment type="subunit">
    <text evidence="2">Monomer.</text>
</comment>
<comment type="subcellular location">
    <subcellularLocation>
        <location evidence="2">Cytoplasm</location>
    </subcellularLocation>
</comment>
<comment type="similarity">
    <text evidence="2">Belongs to the TRAFAC class translation factor GTPase superfamily. Classic translation factor GTPase family. EF-Tu/EF-1A subfamily.</text>
</comment>
<comment type="sequence caution" evidence="3">
    <conflict type="erroneous initiation">
        <sequence resource="EMBL-CDS" id="ABV85085"/>
    </conflict>
</comment>
<dbReference type="EC" id="3.6.5.3" evidence="2"/>
<dbReference type="EMBL" id="CP000683">
    <property type="protein sequence ID" value="ABV85085.1"/>
    <property type="status" value="ALT_INIT"/>
    <property type="molecule type" value="Genomic_DNA"/>
</dbReference>
<dbReference type="RefSeq" id="WP_041404819.1">
    <property type="nucleotide sequence ID" value="NC_009900.1"/>
</dbReference>
<dbReference type="SMR" id="A8F2E9"/>
<dbReference type="KEGG" id="rms:RMA_1042"/>
<dbReference type="HOGENOM" id="CLU_007265_0_1_5"/>
<dbReference type="Proteomes" id="UP000001311">
    <property type="component" value="Chromosome"/>
</dbReference>
<dbReference type="GO" id="GO:0005737">
    <property type="term" value="C:cytoplasm"/>
    <property type="evidence" value="ECO:0007669"/>
    <property type="project" value="UniProtKB-SubCell"/>
</dbReference>
<dbReference type="GO" id="GO:0005525">
    <property type="term" value="F:GTP binding"/>
    <property type="evidence" value="ECO:0007669"/>
    <property type="project" value="UniProtKB-UniRule"/>
</dbReference>
<dbReference type="GO" id="GO:0003924">
    <property type="term" value="F:GTPase activity"/>
    <property type="evidence" value="ECO:0007669"/>
    <property type="project" value="InterPro"/>
</dbReference>
<dbReference type="GO" id="GO:0097216">
    <property type="term" value="F:guanosine tetraphosphate binding"/>
    <property type="evidence" value="ECO:0007669"/>
    <property type="project" value="UniProtKB-ARBA"/>
</dbReference>
<dbReference type="GO" id="GO:0003746">
    <property type="term" value="F:translation elongation factor activity"/>
    <property type="evidence" value="ECO:0007669"/>
    <property type="project" value="UniProtKB-UniRule"/>
</dbReference>
<dbReference type="CDD" id="cd01884">
    <property type="entry name" value="EF_Tu"/>
    <property type="match status" value="1"/>
</dbReference>
<dbReference type="CDD" id="cd03697">
    <property type="entry name" value="EFTU_II"/>
    <property type="match status" value="1"/>
</dbReference>
<dbReference type="CDD" id="cd03707">
    <property type="entry name" value="EFTU_III"/>
    <property type="match status" value="1"/>
</dbReference>
<dbReference type="FunFam" id="2.40.30.10:FF:000001">
    <property type="entry name" value="Elongation factor Tu"/>
    <property type="match status" value="1"/>
</dbReference>
<dbReference type="FunFam" id="3.40.50.300:FF:000003">
    <property type="entry name" value="Elongation factor Tu"/>
    <property type="match status" value="1"/>
</dbReference>
<dbReference type="Gene3D" id="3.40.50.300">
    <property type="entry name" value="P-loop containing nucleotide triphosphate hydrolases"/>
    <property type="match status" value="1"/>
</dbReference>
<dbReference type="Gene3D" id="2.40.30.10">
    <property type="entry name" value="Translation factors"/>
    <property type="match status" value="2"/>
</dbReference>
<dbReference type="HAMAP" id="MF_00118_B">
    <property type="entry name" value="EF_Tu_B"/>
    <property type="match status" value="1"/>
</dbReference>
<dbReference type="InterPro" id="IPR041709">
    <property type="entry name" value="EF-Tu_GTP-bd"/>
</dbReference>
<dbReference type="InterPro" id="IPR050055">
    <property type="entry name" value="EF-Tu_GTPase"/>
</dbReference>
<dbReference type="InterPro" id="IPR004161">
    <property type="entry name" value="EFTu-like_2"/>
</dbReference>
<dbReference type="InterPro" id="IPR033720">
    <property type="entry name" value="EFTU_2"/>
</dbReference>
<dbReference type="InterPro" id="IPR031157">
    <property type="entry name" value="G_TR_CS"/>
</dbReference>
<dbReference type="InterPro" id="IPR027417">
    <property type="entry name" value="P-loop_NTPase"/>
</dbReference>
<dbReference type="InterPro" id="IPR005225">
    <property type="entry name" value="Small_GTP-bd"/>
</dbReference>
<dbReference type="InterPro" id="IPR000795">
    <property type="entry name" value="T_Tr_GTP-bd_dom"/>
</dbReference>
<dbReference type="InterPro" id="IPR009000">
    <property type="entry name" value="Transl_B-barrel_sf"/>
</dbReference>
<dbReference type="InterPro" id="IPR009001">
    <property type="entry name" value="Transl_elong_EF1A/Init_IF2_C"/>
</dbReference>
<dbReference type="InterPro" id="IPR004541">
    <property type="entry name" value="Transl_elong_EFTu/EF1A_bac/org"/>
</dbReference>
<dbReference type="InterPro" id="IPR004160">
    <property type="entry name" value="Transl_elong_EFTu/EF1A_C"/>
</dbReference>
<dbReference type="NCBIfam" id="TIGR00485">
    <property type="entry name" value="EF-Tu"/>
    <property type="match status" value="1"/>
</dbReference>
<dbReference type="NCBIfam" id="NF000766">
    <property type="entry name" value="PRK00049.1"/>
    <property type="match status" value="1"/>
</dbReference>
<dbReference type="NCBIfam" id="NF009372">
    <property type="entry name" value="PRK12735.1"/>
    <property type="match status" value="1"/>
</dbReference>
<dbReference type="NCBIfam" id="NF009373">
    <property type="entry name" value="PRK12736.1"/>
    <property type="match status" value="1"/>
</dbReference>
<dbReference type="NCBIfam" id="TIGR00231">
    <property type="entry name" value="small_GTP"/>
    <property type="match status" value="1"/>
</dbReference>
<dbReference type="PANTHER" id="PTHR43721:SF22">
    <property type="entry name" value="ELONGATION FACTOR TU, MITOCHONDRIAL"/>
    <property type="match status" value="1"/>
</dbReference>
<dbReference type="PANTHER" id="PTHR43721">
    <property type="entry name" value="ELONGATION FACTOR TU-RELATED"/>
    <property type="match status" value="1"/>
</dbReference>
<dbReference type="Pfam" id="PF00009">
    <property type="entry name" value="GTP_EFTU"/>
    <property type="match status" value="1"/>
</dbReference>
<dbReference type="Pfam" id="PF03144">
    <property type="entry name" value="GTP_EFTU_D2"/>
    <property type="match status" value="1"/>
</dbReference>
<dbReference type="Pfam" id="PF03143">
    <property type="entry name" value="GTP_EFTU_D3"/>
    <property type="match status" value="1"/>
</dbReference>
<dbReference type="PRINTS" id="PR00315">
    <property type="entry name" value="ELONGATNFCT"/>
</dbReference>
<dbReference type="SUPFAM" id="SSF50465">
    <property type="entry name" value="EF-Tu/eEF-1alpha/eIF2-gamma C-terminal domain"/>
    <property type="match status" value="1"/>
</dbReference>
<dbReference type="SUPFAM" id="SSF52540">
    <property type="entry name" value="P-loop containing nucleoside triphosphate hydrolases"/>
    <property type="match status" value="1"/>
</dbReference>
<dbReference type="SUPFAM" id="SSF50447">
    <property type="entry name" value="Translation proteins"/>
    <property type="match status" value="1"/>
</dbReference>
<dbReference type="PROSITE" id="PS00301">
    <property type="entry name" value="G_TR_1"/>
    <property type="match status" value="1"/>
</dbReference>
<dbReference type="PROSITE" id="PS51722">
    <property type="entry name" value="G_TR_2"/>
    <property type="match status" value="1"/>
</dbReference>
<sequence>MAKAKFERTKPHVNIGTIGHVDHGKTSLTAAITIVLAKTGGAQATAYDQIDAAPEEKERGITISTAHVEYETKNRHYAHVDCPGHADYVKNMITGAAQMDGAILVVSAADGPMPQTREHILLAKQVGVPAMVVFLNKVDMVDDPDLLELVEMEVRELLSKYGFPGDEIPIIKGSALQALEGKPEGEEAINELMDAVDSYIPQPVRATDKPFLMPIEDVFSISGRGTVVTGRVESGIIKVGDEIEIVGLKDTQKTTCTGVEMFRKLLDEGQAGDNVGILLRGTKREEVERGQVLAKPGSIKPHDKFEAEVYVLSKEEGGRHTPFTNDYRPQFYFRTTDVTGTIKLPADKQMVMPGDNATFTVELIKPIAMQEGLKFSIREGGRTVGAGVVTKINN</sequence>
<reference key="1">
    <citation type="journal article" date="2007" name="Genome Res.">
        <title>Lateral gene transfer between obligate intracellular bacteria: evidence from the Rickettsia massiliae genome.</title>
        <authorList>
            <person name="Blanc G."/>
            <person name="Ogata H."/>
            <person name="Robert C."/>
            <person name="Audic S."/>
            <person name="Claverie J.-M."/>
            <person name="Raoult D."/>
        </authorList>
    </citation>
    <scope>NUCLEOTIDE SEQUENCE [LARGE SCALE GENOMIC DNA]</scope>
    <source>
        <strain>Mtu5</strain>
    </source>
</reference>
<proteinExistence type="inferred from homology"/>
<protein>
    <recommendedName>
        <fullName evidence="2">Elongation factor Tu</fullName>
        <shortName evidence="2">EF-Tu</shortName>
        <ecNumber evidence="2">3.6.5.3</ecNumber>
    </recommendedName>
</protein>
<name>EFTU_RICM5</name>
<keyword id="KW-0963">Cytoplasm</keyword>
<keyword id="KW-0251">Elongation factor</keyword>
<keyword id="KW-0342">GTP-binding</keyword>
<keyword id="KW-0378">Hydrolase</keyword>
<keyword id="KW-0460">Magnesium</keyword>
<keyword id="KW-0479">Metal-binding</keyword>
<keyword id="KW-0547">Nucleotide-binding</keyword>
<keyword id="KW-0648">Protein biosynthesis</keyword>
<feature type="chain" id="PRO_0000337501" description="Elongation factor Tu">
    <location>
        <begin position="1"/>
        <end position="394"/>
    </location>
</feature>
<feature type="domain" description="tr-type G">
    <location>
        <begin position="10"/>
        <end position="204"/>
    </location>
</feature>
<feature type="region of interest" description="G1" evidence="1">
    <location>
        <begin position="19"/>
        <end position="26"/>
    </location>
</feature>
<feature type="region of interest" description="G2" evidence="1">
    <location>
        <begin position="60"/>
        <end position="64"/>
    </location>
</feature>
<feature type="region of interest" description="G3" evidence="1">
    <location>
        <begin position="81"/>
        <end position="84"/>
    </location>
</feature>
<feature type="region of interest" description="G4" evidence="1">
    <location>
        <begin position="136"/>
        <end position="139"/>
    </location>
</feature>
<feature type="region of interest" description="G5" evidence="1">
    <location>
        <begin position="174"/>
        <end position="176"/>
    </location>
</feature>
<feature type="binding site" evidence="2">
    <location>
        <begin position="19"/>
        <end position="26"/>
    </location>
    <ligand>
        <name>GTP</name>
        <dbReference type="ChEBI" id="CHEBI:37565"/>
    </ligand>
</feature>
<feature type="binding site" evidence="2">
    <location>
        <position position="26"/>
    </location>
    <ligand>
        <name>Mg(2+)</name>
        <dbReference type="ChEBI" id="CHEBI:18420"/>
    </ligand>
</feature>
<feature type="binding site" evidence="2">
    <location>
        <begin position="81"/>
        <end position="85"/>
    </location>
    <ligand>
        <name>GTP</name>
        <dbReference type="ChEBI" id="CHEBI:37565"/>
    </ligand>
</feature>
<feature type="binding site" evidence="2">
    <location>
        <begin position="136"/>
        <end position="139"/>
    </location>
    <ligand>
        <name>GTP</name>
        <dbReference type="ChEBI" id="CHEBI:37565"/>
    </ligand>
</feature>
<organism>
    <name type="scientific">Rickettsia massiliae (strain Mtu5)</name>
    <dbReference type="NCBI Taxonomy" id="416276"/>
    <lineage>
        <taxon>Bacteria</taxon>
        <taxon>Pseudomonadati</taxon>
        <taxon>Pseudomonadota</taxon>
        <taxon>Alphaproteobacteria</taxon>
        <taxon>Rickettsiales</taxon>
        <taxon>Rickettsiaceae</taxon>
        <taxon>Rickettsieae</taxon>
        <taxon>Rickettsia</taxon>
        <taxon>spotted fever group</taxon>
    </lineage>
</organism>
<accession>A8F2E9</accession>
<gene>
    <name evidence="2" type="primary">tuf</name>
    <name type="ordered locus">RMA_1042</name>
</gene>
<evidence type="ECO:0000250" key="1"/>
<evidence type="ECO:0000255" key="2">
    <source>
        <dbReference type="HAMAP-Rule" id="MF_00118"/>
    </source>
</evidence>
<evidence type="ECO:0000305" key="3"/>